<sequence length="390" mass="43324">MGIKGLAKLLSDEAPLSLKEVPLSHLHGRKLAIDASMAIYQFLIAVRSGGPGGQNAAMMLTNADGETTSHIQGIFNRTIRFISEGIRPVYVFDGKPPQFKSGELLKRREKRLKAEQALKAAEESGNIEEQDKQSKRLVRAGTKENEDCIKLLTLMGVPVIRAPCEAEAQAAALARSGKVYAAATEDMDALTFRSPVMVRKMTFANASKSDVQQIFYDKAIEGLEITHDQFVDLCILLGCDYCDTIKGIGPKTALKLIREHKNIETILKHLNREKYVVPDIYVEARRLFNHHEVLPDNEIELKWTECQPEPLKSFLVDEMGFNPDRVQASIEKLQKAFKASAKPQSRMDSFFKVKANPEGDKKKAEKRKAELAASRGKGKKGKGGGGFKKK</sequence>
<dbReference type="EC" id="3.1.-.-" evidence="1"/>
<dbReference type="EMBL" id="CM000644">
    <property type="protein sequence ID" value="EED90855.1"/>
    <property type="molecule type" value="Genomic_DNA"/>
</dbReference>
<dbReference type="RefSeq" id="XP_002292004.1">
    <property type="nucleotide sequence ID" value="XM_002291968.1"/>
</dbReference>
<dbReference type="SMR" id="B8C6S5"/>
<dbReference type="FunCoup" id="B8C6S5">
    <property type="interactions" value="530"/>
</dbReference>
<dbReference type="STRING" id="35128.B8C6S5"/>
<dbReference type="PaxDb" id="35128-Thaps269347"/>
<dbReference type="EnsemblProtists" id="EED90855">
    <property type="protein sequence ID" value="EED90855"/>
    <property type="gene ID" value="THAPSDRAFT_269347"/>
</dbReference>
<dbReference type="GeneID" id="7445577"/>
<dbReference type="KEGG" id="tps:THAPSDRAFT_269347"/>
<dbReference type="eggNOG" id="KOG2519">
    <property type="taxonomic scope" value="Eukaryota"/>
</dbReference>
<dbReference type="InParanoid" id="B8C6S5"/>
<dbReference type="OMA" id="MGIPWVQ"/>
<dbReference type="Proteomes" id="UP000001449">
    <property type="component" value="Chromosome 8"/>
</dbReference>
<dbReference type="GO" id="GO:0005739">
    <property type="term" value="C:mitochondrion"/>
    <property type="evidence" value="ECO:0007669"/>
    <property type="project" value="UniProtKB-SubCell"/>
</dbReference>
<dbReference type="GO" id="GO:0005730">
    <property type="term" value="C:nucleolus"/>
    <property type="evidence" value="ECO:0007669"/>
    <property type="project" value="UniProtKB-SubCell"/>
</dbReference>
<dbReference type="GO" id="GO:0005654">
    <property type="term" value="C:nucleoplasm"/>
    <property type="evidence" value="ECO:0007669"/>
    <property type="project" value="UniProtKB-SubCell"/>
</dbReference>
<dbReference type="GO" id="GO:0008409">
    <property type="term" value="F:5'-3' exonuclease activity"/>
    <property type="evidence" value="ECO:0000318"/>
    <property type="project" value="GO_Central"/>
</dbReference>
<dbReference type="GO" id="GO:0017108">
    <property type="term" value="F:5'-flap endonuclease activity"/>
    <property type="evidence" value="ECO:0000318"/>
    <property type="project" value="GO_Central"/>
</dbReference>
<dbReference type="GO" id="GO:0003677">
    <property type="term" value="F:DNA binding"/>
    <property type="evidence" value="ECO:0007669"/>
    <property type="project" value="UniProtKB-UniRule"/>
</dbReference>
<dbReference type="GO" id="GO:0000287">
    <property type="term" value="F:magnesium ion binding"/>
    <property type="evidence" value="ECO:0007669"/>
    <property type="project" value="UniProtKB-UniRule"/>
</dbReference>
<dbReference type="GO" id="GO:0006284">
    <property type="term" value="P:base-excision repair"/>
    <property type="evidence" value="ECO:0007669"/>
    <property type="project" value="UniProtKB-UniRule"/>
</dbReference>
<dbReference type="GO" id="GO:0043137">
    <property type="term" value="P:DNA replication, removal of RNA primer"/>
    <property type="evidence" value="ECO:0007669"/>
    <property type="project" value="UniProtKB-UniRule"/>
</dbReference>
<dbReference type="CDD" id="cd09867">
    <property type="entry name" value="PIN_FEN1"/>
    <property type="match status" value="1"/>
</dbReference>
<dbReference type="FunFam" id="1.10.150.20:FF:000009">
    <property type="entry name" value="Flap endonuclease 1"/>
    <property type="match status" value="1"/>
</dbReference>
<dbReference type="FunFam" id="3.40.50.1010:FF:000016">
    <property type="entry name" value="Flap endonuclease 1"/>
    <property type="match status" value="1"/>
</dbReference>
<dbReference type="Gene3D" id="1.10.150.20">
    <property type="entry name" value="5' to 3' exonuclease, C-terminal subdomain"/>
    <property type="match status" value="1"/>
</dbReference>
<dbReference type="Gene3D" id="3.40.50.1010">
    <property type="entry name" value="5'-nuclease"/>
    <property type="match status" value="1"/>
</dbReference>
<dbReference type="HAMAP" id="MF_00614">
    <property type="entry name" value="Fen"/>
    <property type="match status" value="1"/>
</dbReference>
<dbReference type="InterPro" id="IPR036279">
    <property type="entry name" value="5-3_exonuclease_C_sf"/>
</dbReference>
<dbReference type="InterPro" id="IPR023426">
    <property type="entry name" value="Flap_endonuc"/>
</dbReference>
<dbReference type="InterPro" id="IPR008918">
    <property type="entry name" value="HhH2"/>
</dbReference>
<dbReference type="InterPro" id="IPR029060">
    <property type="entry name" value="PIN-like_dom_sf"/>
</dbReference>
<dbReference type="InterPro" id="IPR006086">
    <property type="entry name" value="XPG-I_dom"/>
</dbReference>
<dbReference type="InterPro" id="IPR006084">
    <property type="entry name" value="XPG/Rad2"/>
</dbReference>
<dbReference type="InterPro" id="IPR019974">
    <property type="entry name" value="XPG_CS"/>
</dbReference>
<dbReference type="InterPro" id="IPR006085">
    <property type="entry name" value="XPG_DNA_repair_N"/>
</dbReference>
<dbReference type="PANTHER" id="PTHR11081:SF9">
    <property type="entry name" value="FLAP ENDONUCLEASE 1"/>
    <property type="match status" value="1"/>
</dbReference>
<dbReference type="PANTHER" id="PTHR11081">
    <property type="entry name" value="FLAP ENDONUCLEASE FAMILY MEMBER"/>
    <property type="match status" value="1"/>
</dbReference>
<dbReference type="Pfam" id="PF00867">
    <property type="entry name" value="XPG_I"/>
    <property type="match status" value="1"/>
</dbReference>
<dbReference type="Pfam" id="PF00752">
    <property type="entry name" value="XPG_N"/>
    <property type="match status" value="1"/>
</dbReference>
<dbReference type="PRINTS" id="PR00853">
    <property type="entry name" value="XPGRADSUPER"/>
</dbReference>
<dbReference type="SMART" id="SM00279">
    <property type="entry name" value="HhH2"/>
    <property type="match status" value="1"/>
</dbReference>
<dbReference type="SMART" id="SM00484">
    <property type="entry name" value="XPGI"/>
    <property type="match status" value="1"/>
</dbReference>
<dbReference type="SMART" id="SM00485">
    <property type="entry name" value="XPGN"/>
    <property type="match status" value="1"/>
</dbReference>
<dbReference type="SUPFAM" id="SSF47807">
    <property type="entry name" value="5' to 3' exonuclease, C-terminal subdomain"/>
    <property type="match status" value="1"/>
</dbReference>
<dbReference type="SUPFAM" id="SSF88723">
    <property type="entry name" value="PIN domain-like"/>
    <property type="match status" value="1"/>
</dbReference>
<dbReference type="PROSITE" id="PS00841">
    <property type="entry name" value="XPG_1"/>
    <property type="match status" value="1"/>
</dbReference>
<accession>B8C6S5</accession>
<feature type="chain" id="PRO_0000403554" description="Flap endonuclease 1">
    <location>
        <begin position="1"/>
        <end position="390"/>
    </location>
</feature>
<feature type="region of interest" description="N-domain">
    <location>
        <begin position="1"/>
        <end position="111"/>
    </location>
</feature>
<feature type="region of interest" description="I-domain">
    <location>
        <begin position="129"/>
        <end position="260"/>
    </location>
</feature>
<feature type="region of interest" description="Disordered" evidence="2">
    <location>
        <begin position="342"/>
        <end position="390"/>
    </location>
</feature>
<feature type="region of interest" description="Interaction with PCNA" evidence="1">
    <location>
        <begin position="343"/>
        <end position="351"/>
    </location>
</feature>
<feature type="compositionally biased region" description="Basic and acidic residues" evidence="2">
    <location>
        <begin position="349"/>
        <end position="370"/>
    </location>
</feature>
<feature type="compositionally biased region" description="Basic residues" evidence="2">
    <location>
        <begin position="376"/>
        <end position="390"/>
    </location>
</feature>
<feature type="binding site" evidence="1">
    <location>
        <position position="34"/>
    </location>
    <ligand>
        <name>Mg(2+)</name>
        <dbReference type="ChEBI" id="CHEBI:18420"/>
        <label>1</label>
    </ligand>
</feature>
<feature type="binding site" evidence="1">
    <location>
        <position position="47"/>
    </location>
    <ligand>
        <name>DNA</name>
        <dbReference type="ChEBI" id="CHEBI:16991"/>
    </ligand>
</feature>
<feature type="binding site" evidence="1">
    <location>
        <position position="77"/>
    </location>
    <ligand>
        <name>DNA</name>
        <dbReference type="ChEBI" id="CHEBI:16991"/>
    </ligand>
</feature>
<feature type="binding site" evidence="1">
    <location>
        <position position="93"/>
    </location>
    <ligand>
        <name>Mg(2+)</name>
        <dbReference type="ChEBI" id="CHEBI:18420"/>
        <label>1</label>
    </ligand>
</feature>
<feature type="binding site" evidence="1">
    <location>
        <position position="165"/>
    </location>
    <ligand>
        <name>DNA</name>
        <dbReference type="ChEBI" id="CHEBI:16991"/>
    </ligand>
</feature>
<feature type="binding site" evidence="1">
    <location>
        <position position="165"/>
    </location>
    <ligand>
        <name>Mg(2+)</name>
        <dbReference type="ChEBI" id="CHEBI:18420"/>
        <label>1</label>
    </ligand>
</feature>
<feature type="binding site" evidence="1">
    <location>
        <position position="167"/>
    </location>
    <ligand>
        <name>Mg(2+)</name>
        <dbReference type="ChEBI" id="CHEBI:18420"/>
        <label>1</label>
    </ligand>
</feature>
<feature type="binding site" evidence="1">
    <location>
        <position position="186"/>
    </location>
    <ligand>
        <name>Mg(2+)</name>
        <dbReference type="ChEBI" id="CHEBI:18420"/>
        <label>2</label>
    </ligand>
</feature>
<feature type="binding site" evidence="1">
    <location>
        <position position="188"/>
    </location>
    <ligand>
        <name>Mg(2+)</name>
        <dbReference type="ChEBI" id="CHEBI:18420"/>
        <label>2</label>
    </ligand>
</feature>
<feature type="binding site" evidence="1">
    <location>
        <position position="238"/>
    </location>
    <ligand>
        <name>DNA</name>
        <dbReference type="ChEBI" id="CHEBI:16991"/>
    </ligand>
</feature>
<feature type="binding site" evidence="1">
    <location>
        <position position="240"/>
    </location>
    <ligand>
        <name>DNA</name>
        <dbReference type="ChEBI" id="CHEBI:16991"/>
    </ligand>
</feature>
<feature type="binding site" evidence="1">
    <location>
        <position position="240"/>
    </location>
    <ligand>
        <name>Mg(2+)</name>
        <dbReference type="ChEBI" id="CHEBI:18420"/>
        <label>2</label>
    </ligand>
</feature>
<gene>
    <name evidence="1" type="primary">FEN1</name>
    <name type="ORF">THAPSDRAFT_269347</name>
</gene>
<protein>
    <recommendedName>
        <fullName evidence="1">Flap endonuclease 1</fullName>
        <shortName evidence="1">FEN-1</shortName>
        <ecNumber evidence="1">3.1.-.-</ecNumber>
    </recommendedName>
    <alternativeName>
        <fullName evidence="1">Flap structure-specific endonuclease 1</fullName>
    </alternativeName>
</protein>
<reference key="1">
    <citation type="journal article" date="2004" name="Science">
        <title>The genome of the diatom Thalassiosira pseudonana: ecology, evolution, and metabolism.</title>
        <authorList>
            <person name="Armbrust E.V."/>
            <person name="Berges J.A."/>
            <person name="Bowler C."/>
            <person name="Green B.R."/>
            <person name="Martinez D."/>
            <person name="Putnam N.H."/>
            <person name="Zhou S."/>
            <person name="Allen A.E."/>
            <person name="Apt K.E."/>
            <person name="Bechner M."/>
            <person name="Brzezinski M.A."/>
            <person name="Chaal B.K."/>
            <person name="Chiovitti A."/>
            <person name="Davis A.K."/>
            <person name="Demarest M.S."/>
            <person name="Detter J.C."/>
            <person name="Glavina T."/>
            <person name="Goodstein D."/>
            <person name="Hadi M.Z."/>
            <person name="Hellsten U."/>
            <person name="Hildebrand M."/>
            <person name="Jenkins B.D."/>
            <person name="Jurka J."/>
            <person name="Kapitonov V.V."/>
            <person name="Kroger N."/>
            <person name="Lau W.W."/>
            <person name="Lane T.W."/>
            <person name="Larimer F.W."/>
            <person name="Lippmeier J.C."/>
            <person name="Lucas S."/>
            <person name="Medina M."/>
            <person name="Montsant A."/>
            <person name="Obornik M."/>
            <person name="Parker M.S."/>
            <person name="Palenik B."/>
            <person name="Pazour G.J."/>
            <person name="Richardson P.M."/>
            <person name="Rynearson T.A."/>
            <person name="Saito M.A."/>
            <person name="Schwartz D.C."/>
            <person name="Thamatrakoln K."/>
            <person name="Valentin K."/>
            <person name="Vardi A."/>
            <person name="Wilkerson F.P."/>
            <person name="Rokhsar D.S."/>
        </authorList>
    </citation>
    <scope>NUCLEOTIDE SEQUENCE [LARGE SCALE GENOMIC DNA]</scope>
    <source>
        <strain>CCMP1335 / NEPCC58 / CCAP 1085/12</strain>
    </source>
</reference>
<reference key="2">
    <citation type="submission" date="2008-09" db="EMBL/GenBank/DDBJ databases">
        <authorList>
            <consortium name="Diatom Consortium"/>
            <person name="Grigoriev I."/>
            <person name="Grimwood J."/>
            <person name="Kuo A."/>
            <person name="Otillar R.P."/>
            <person name="Salamov A."/>
            <person name="Detter J.C."/>
            <person name="Schmutz J."/>
            <person name="Lindquist E."/>
            <person name="Shapiro H."/>
            <person name="Lucas S."/>
            <person name="Glavina del Rio T."/>
            <person name="Bruce D."/>
            <person name="Pitluck S."/>
            <person name="Rokhsar D."/>
            <person name="Armbrust V."/>
        </authorList>
    </citation>
    <scope>GENOME REANNOTATION</scope>
    <source>
        <strain>CCMP1335 / NEPCC58 / CCAP 1085/12</strain>
    </source>
</reference>
<proteinExistence type="inferred from homology"/>
<name>FEN1_THAPS</name>
<comment type="function">
    <text evidence="1">Structure-specific nuclease with 5'-flap endonuclease and 5'-3' exonuclease activities involved in DNA replication and repair. During DNA replication, cleaves the 5'-overhanging flap structure that is generated by displacement synthesis when DNA polymerase encounters the 5'-end of a downstream Okazaki fragment. It enters the flap from the 5'-end and then tracks to cleave the flap base, leaving a nick for ligation. Also involved in the long patch base excision repair (LP-BER) pathway, by cleaving within the apurinic/apyrimidinic (AP) site-terminated flap. Acts as a genome stabilization factor that prevents flaps from equilibrating into structures that lead to duplications and deletions. Also possesses 5'-3' exonuclease activity on nicked or gapped double-stranded DNA, and exhibits RNase H activity. Also involved in replication and repair of rDNA and in repairing mitochondrial DNA.</text>
</comment>
<comment type="cofactor">
    <cofactor evidence="1">
        <name>Mg(2+)</name>
        <dbReference type="ChEBI" id="CHEBI:18420"/>
    </cofactor>
    <text evidence="1">Binds 2 magnesium ions per subunit. They probably participate in the reaction catalyzed by the enzyme. May bind an additional third magnesium ion after substrate binding.</text>
</comment>
<comment type="subunit">
    <text evidence="1">Interacts with PCNA. Three molecules of FEN1 bind to one PCNA trimer with each molecule binding to one PCNA monomer. PCNA stimulates the nuclease activity without altering cleavage specificity.</text>
</comment>
<comment type="subcellular location">
    <subcellularLocation>
        <location evidence="1">Nucleus</location>
        <location evidence="1">Nucleolus</location>
    </subcellularLocation>
    <subcellularLocation>
        <location evidence="1">Nucleus</location>
        <location evidence="1">Nucleoplasm</location>
    </subcellularLocation>
    <subcellularLocation>
        <location evidence="1">Mitochondrion</location>
    </subcellularLocation>
    <text evidence="1">Resides mostly in the nucleoli and relocalizes to the nucleoplasm upon DNA damage.</text>
</comment>
<comment type="PTM">
    <text evidence="1">Phosphorylated. Phosphorylation upon DNA damage induces relocalization to the nuclear plasma.</text>
</comment>
<comment type="similarity">
    <text evidence="1">Belongs to the XPG/RAD2 endonuclease family. FEN1 subfamily.</text>
</comment>
<organism>
    <name type="scientific">Thalassiosira pseudonana</name>
    <name type="common">Marine diatom</name>
    <name type="synonym">Cyclotella nana</name>
    <dbReference type="NCBI Taxonomy" id="35128"/>
    <lineage>
        <taxon>Eukaryota</taxon>
        <taxon>Sar</taxon>
        <taxon>Stramenopiles</taxon>
        <taxon>Ochrophyta</taxon>
        <taxon>Bacillariophyta</taxon>
        <taxon>Coscinodiscophyceae</taxon>
        <taxon>Thalassiosirophycidae</taxon>
        <taxon>Thalassiosirales</taxon>
        <taxon>Thalassiosiraceae</taxon>
        <taxon>Thalassiosira</taxon>
    </lineage>
</organism>
<evidence type="ECO:0000255" key="1">
    <source>
        <dbReference type="HAMAP-Rule" id="MF_03140"/>
    </source>
</evidence>
<evidence type="ECO:0000256" key="2">
    <source>
        <dbReference type="SAM" id="MobiDB-lite"/>
    </source>
</evidence>
<keyword id="KW-0227">DNA damage</keyword>
<keyword id="KW-0234">DNA repair</keyword>
<keyword id="KW-0235">DNA replication</keyword>
<keyword id="KW-0255">Endonuclease</keyword>
<keyword id="KW-0269">Exonuclease</keyword>
<keyword id="KW-0378">Hydrolase</keyword>
<keyword id="KW-0460">Magnesium</keyword>
<keyword id="KW-0479">Metal-binding</keyword>
<keyword id="KW-0496">Mitochondrion</keyword>
<keyword id="KW-0540">Nuclease</keyword>
<keyword id="KW-0539">Nucleus</keyword>
<keyword id="KW-0597">Phosphoprotein</keyword>
<keyword id="KW-1185">Reference proteome</keyword>